<dbReference type="EMBL" id="CP000438">
    <property type="protein sequence ID" value="ABJ13530.1"/>
    <property type="molecule type" value="Genomic_DNA"/>
</dbReference>
<dbReference type="RefSeq" id="WP_003093734.1">
    <property type="nucleotide sequence ID" value="NZ_CP034244.1"/>
</dbReference>
<dbReference type="SMR" id="Q02T76"/>
<dbReference type="GeneID" id="77219202"/>
<dbReference type="KEGG" id="pau:PA14_08890"/>
<dbReference type="PseudoCAP" id="PA14_08890"/>
<dbReference type="HOGENOM" id="CLU_144911_0_1_6"/>
<dbReference type="BioCyc" id="PAER208963:G1G74-740-MONOMER"/>
<dbReference type="Proteomes" id="UP000000653">
    <property type="component" value="Chromosome"/>
</dbReference>
<dbReference type="GO" id="GO:0005737">
    <property type="term" value="C:cytoplasm"/>
    <property type="evidence" value="ECO:0007669"/>
    <property type="project" value="UniProtKB-ARBA"/>
</dbReference>
<dbReference type="GO" id="GO:0015935">
    <property type="term" value="C:small ribosomal subunit"/>
    <property type="evidence" value="ECO:0007669"/>
    <property type="project" value="InterPro"/>
</dbReference>
<dbReference type="GO" id="GO:0019843">
    <property type="term" value="F:rRNA binding"/>
    <property type="evidence" value="ECO:0007669"/>
    <property type="project" value="UniProtKB-UniRule"/>
</dbReference>
<dbReference type="GO" id="GO:0003735">
    <property type="term" value="F:structural constituent of ribosome"/>
    <property type="evidence" value="ECO:0007669"/>
    <property type="project" value="InterPro"/>
</dbReference>
<dbReference type="GO" id="GO:0000028">
    <property type="term" value="P:ribosomal small subunit assembly"/>
    <property type="evidence" value="ECO:0007669"/>
    <property type="project" value="TreeGrafter"/>
</dbReference>
<dbReference type="GO" id="GO:0006412">
    <property type="term" value="P:translation"/>
    <property type="evidence" value="ECO:0007669"/>
    <property type="project" value="UniProtKB-UniRule"/>
</dbReference>
<dbReference type="FunFam" id="3.30.860.10:FF:000001">
    <property type="entry name" value="30S ribosomal protein S19"/>
    <property type="match status" value="1"/>
</dbReference>
<dbReference type="Gene3D" id="3.30.860.10">
    <property type="entry name" value="30s Ribosomal Protein S19, Chain A"/>
    <property type="match status" value="1"/>
</dbReference>
<dbReference type="HAMAP" id="MF_00531">
    <property type="entry name" value="Ribosomal_uS19"/>
    <property type="match status" value="1"/>
</dbReference>
<dbReference type="InterPro" id="IPR002222">
    <property type="entry name" value="Ribosomal_uS19"/>
</dbReference>
<dbReference type="InterPro" id="IPR005732">
    <property type="entry name" value="Ribosomal_uS19_bac-type"/>
</dbReference>
<dbReference type="InterPro" id="IPR020934">
    <property type="entry name" value="Ribosomal_uS19_CS"/>
</dbReference>
<dbReference type="InterPro" id="IPR023575">
    <property type="entry name" value="Ribosomal_uS19_SF"/>
</dbReference>
<dbReference type="NCBIfam" id="TIGR01050">
    <property type="entry name" value="rpsS_bact"/>
    <property type="match status" value="1"/>
</dbReference>
<dbReference type="PANTHER" id="PTHR11880">
    <property type="entry name" value="RIBOSOMAL PROTEIN S19P FAMILY MEMBER"/>
    <property type="match status" value="1"/>
</dbReference>
<dbReference type="PANTHER" id="PTHR11880:SF8">
    <property type="entry name" value="SMALL RIBOSOMAL SUBUNIT PROTEIN US19M"/>
    <property type="match status" value="1"/>
</dbReference>
<dbReference type="Pfam" id="PF00203">
    <property type="entry name" value="Ribosomal_S19"/>
    <property type="match status" value="1"/>
</dbReference>
<dbReference type="PIRSF" id="PIRSF002144">
    <property type="entry name" value="Ribosomal_S19"/>
    <property type="match status" value="1"/>
</dbReference>
<dbReference type="PRINTS" id="PR00975">
    <property type="entry name" value="RIBOSOMALS19"/>
</dbReference>
<dbReference type="SUPFAM" id="SSF54570">
    <property type="entry name" value="Ribosomal protein S19"/>
    <property type="match status" value="1"/>
</dbReference>
<dbReference type="PROSITE" id="PS00323">
    <property type="entry name" value="RIBOSOMAL_S19"/>
    <property type="match status" value="1"/>
</dbReference>
<proteinExistence type="inferred from homology"/>
<feature type="chain" id="PRO_1000051103" description="Small ribosomal subunit protein uS19">
    <location>
        <begin position="1"/>
        <end position="91"/>
    </location>
</feature>
<keyword id="KW-0687">Ribonucleoprotein</keyword>
<keyword id="KW-0689">Ribosomal protein</keyword>
<keyword id="KW-0694">RNA-binding</keyword>
<keyword id="KW-0699">rRNA-binding</keyword>
<name>RS19_PSEAB</name>
<protein>
    <recommendedName>
        <fullName evidence="1">Small ribosomal subunit protein uS19</fullName>
    </recommendedName>
    <alternativeName>
        <fullName evidence="2">30S ribosomal protein S19</fullName>
    </alternativeName>
</protein>
<comment type="function">
    <text evidence="1">Protein S19 forms a complex with S13 that binds strongly to the 16S ribosomal RNA.</text>
</comment>
<comment type="similarity">
    <text evidence="1">Belongs to the universal ribosomal protein uS19 family.</text>
</comment>
<reference key="1">
    <citation type="journal article" date="2006" name="Genome Biol.">
        <title>Genomic analysis reveals that Pseudomonas aeruginosa virulence is combinatorial.</title>
        <authorList>
            <person name="Lee D.G."/>
            <person name="Urbach J.M."/>
            <person name="Wu G."/>
            <person name="Liberati N.T."/>
            <person name="Feinbaum R.L."/>
            <person name="Miyata S."/>
            <person name="Diggins L.T."/>
            <person name="He J."/>
            <person name="Saucier M."/>
            <person name="Deziel E."/>
            <person name="Friedman L."/>
            <person name="Li L."/>
            <person name="Grills G."/>
            <person name="Montgomery K."/>
            <person name="Kucherlapati R."/>
            <person name="Rahme L.G."/>
            <person name="Ausubel F.M."/>
        </authorList>
    </citation>
    <scope>NUCLEOTIDE SEQUENCE [LARGE SCALE GENOMIC DNA]</scope>
    <source>
        <strain>UCBPP-PA14</strain>
    </source>
</reference>
<organism>
    <name type="scientific">Pseudomonas aeruginosa (strain UCBPP-PA14)</name>
    <dbReference type="NCBI Taxonomy" id="208963"/>
    <lineage>
        <taxon>Bacteria</taxon>
        <taxon>Pseudomonadati</taxon>
        <taxon>Pseudomonadota</taxon>
        <taxon>Gammaproteobacteria</taxon>
        <taxon>Pseudomonadales</taxon>
        <taxon>Pseudomonadaceae</taxon>
        <taxon>Pseudomonas</taxon>
    </lineage>
</organism>
<accession>Q02T76</accession>
<gene>
    <name evidence="1" type="primary">rpsS</name>
    <name type="ordered locus">PA14_08890</name>
</gene>
<evidence type="ECO:0000255" key="1">
    <source>
        <dbReference type="HAMAP-Rule" id="MF_00531"/>
    </source>
</evidence>
<evidence type="ECO:0000305" key="2"/>
<sequence length="91" mass="10357">MPRSLKKGPFIDLHLLKKVEVAVEKNDRKPIKTWSRRSMILPHMVGLTIAVHNGRQHVPVLVNEDMVGHKLGEFAATRTYRGHAADKKAKR</sequence>